<sequence length="433" mass="49643">MRYERVKGTVDIFGQDIPYWYFVEQRAIQVALLFGYKEIRTPVFEQTELFARSVGQETDIVQKEMYTFTDKGGRSITLRPEGTAPTIRAFLENSMINLGLPQRFYYLGPMFRYERPQAGRLRQFHQFGIELIGSADPAADVETIQLAKMFLDSLELKKYKIYINSIGCQECRRAYKEALRSYYEHHYDHICDDCKRRFETNIMRLLDCKVDINVAKQAPKISDYLCDHCRDHYESIKQMLTDLRVYFHEDSSLVRGLDYYTRTVFEIKHESLGAQSTILAGGRYDGLCKELGGHDIPSLGFASGIERLILAVKAEEIEIPKPPYCDVYIASIGKQARVKAFQIAQGLRLCKIPVISDVNSRSLKAQLKHADKLGAILAIIIGENELAQSTVQVKNLLTETQSEVEFDYVVDYVLDLLKVEGRKGRGFREGNNT</sequence>
<keyword id="KW-0030">Aminoacyl-tRNA synthetase</keyword>
<keyword id="KW-0067">ATP-binding</keyword>
<keyword id="KW-0963">Cytoplasm</keyword>
<keyword id="KW-0436">Ligase</keyword>
<keyword id="KW-0547">Nucleotide-binding</keyword>
<keyword id="KW-0648">Protein biosynthesis</keyword>
<keyword id="KW-1185">Reference proteome</keyword>
<name>SYH_PSELT</name>
<evidence type="ECO:0000255" key="1">
    <source>
        <dbReference type="HAMAP-Rule" id="MF_00127"/>
    </source>
</evidence>
<comment type="catalytic activity">
    <reaction evidence="1">
        <text>tRNA(His) + L-histidine + ATP = L-histidyl-tRNA(His) + AMP + diphosphate + H(+)</text>
        <dbReference type="Rhea" id="RHEA:17313"/>
        <dbReference type="Rhea" id="RHEA-COMP:9665"/>
        <dbReference type="Rhea" id="RHEA-COMP:9689"/>
        <dbReference type="ChEBI" id="CHEBI:15378"/>
        <dbReference type="ChEBI" id="CHEBI:30616"/>
        <dbReference type="ChEBI" id="CHEBI:33019"/>
        <dbReference type="ChEBI" id="CHEBI:57595"/>
        <dbReference type="ChEBI" id="CHEBI:78442"/>
        <dbReference type="ChEBI" id="CHEBI:78527"/>
        <dbReference type="ChEBI" id="CHEBI:456215"/>
        <dbReference type="EC" id="6.1.1.21"/>
    </reaction>
</comment>
<comment type="subunit">
    <text evidence="1">Homodimer.</text>
</comment>
<comment type="subcellular location">
    <subcellularLocation>
        <location evidence="1">Cytoplasm</location>
    </subcellularLocation>
</comment>
<comment type="similarity">
    <text evidence="1">Belongs to the class-II aminoacyl-tRNA synthetase family.</text>
</comment>
<reference key="1">
    <citation type="submission" date="2007-08" db="EMBL/GenBank/DDBJ databases">
        <title>Complete sequence of Thermotoga lettingae TMO.</title>
        <authorList>
            <consortium name="US DOE Joint Genome Institute"/>
            <person name="Copeland A."/>
            <person name="Lucas S."/>
            <person name="Lapidus A."/>
            <person name="Barry K."/>
            <person name="Glavina del Rio T."/>
            <person name="Dalin E."/>
            <person name="Tice H."/>
            <person name="Pitluck S."/>
            <person name="Foster B."/>
            <person name="Bruce D."/>
            <person name="Schmutz J."/>
            <person name="Larimer F."/>
            <person name="Land M."/>
            <person name="Hauser L."/>
            <person name="Kyrpides N."/>
            <person name="Mikhailova N."/>
            <person name="Nelson K."/>
            <person name="Gogarten J.P."/>
            <person name="Noll K."/>
            <person name="Richardson P."/>
        </authorList>
    </citation>
    <scope>NUCLEOTIDE SEQUENCE [LARGE SCALE GENOMIC DNA]</scope>
    <source>
        <strain>ATCC BAA-301 / DSM 14385 / NBRC 107922 / TMO</strain>
    </source>
</reference>
<gene>
    <name evidence="1" type="primary">hisS</name>
    <name type="ordered locus">Tlet_0761</name>
</gene>
<protein>
    <recommendedName>
        <fullName evidence="1">Histidine--tRNA ligase</fullName>
        <ecNumber evidence="1">6.1.1.21</ecNumber>
    </recommendedName>
    <alternativeName>
        <fullName evidence="1">Histidyl-tRNA synthetase</fullName>
        <shortName evidence="1">HisRS</shortName>
    </alternativeName>
</protein>
<feature type="chain" id="PRO_1000057832" description="Histidine--tRNA ligase">
    <location>
        <begin position="1"/>
        <end position="433"/>
    </location>
</feature>
<accession>A8F593</accession>
<organism>
    <name type="scientific">Pseudothermotoga lettingae (strain ATCC BAA-301 / DSM 14385 / NBRC 107922 / TMO)</name>
    <name type="common">Thermotoga lettingae</name>
    <dbReference type="NCBI Taxonomy" id="416591"/>
    <lineage>
        <taxon>Bacteria</taxon>
        <taxon>Thermotogati</taxon>
        <taxon>Thermotogota</taxon>
        <taxon>Thermotogae</taxon>
        <taxon>Thermotogales</taxon>
        <taxon>Thermotogaceae</taxon>
        <taxon>Pseudothermotoga</taxon>
    </lineage>
</organism>
<proteinExistence type="inferred from homology"/>
<dbReference type="EC" id="6.1.1.21" evidence="1"/>
<dbReference type="EMBL" id="CP000812">
    <property type="protein sequence ID" value="ABV33327.1"/>
    <property type="molecule type" value="Genomic_DNA"/>
</dbReference>
<dbReference type="RefSeq" id="WP_012002808.1">
    <property type="nucleotide sequence ID" value="NZ_BSDV01000001.1"/>
</dbReference>
<dbReference type="SMR" id="A8F593"/>
<dbReference type="STRING" id="416591.Tlet_0761"/>
<dbReference type="KEGG" id="tle:Tlet_0761"/>
<dbReference type="eggNOG" id="COG0124">
    <property type="taxonomic scope" value="Bacteria"/>
</dbReference>
<dbReference type="HOGENOM" id="CLU_025113_1_1_0"/>
<dbReference type="OrthoDB" id="9800814at2"/>
<dbReference type="Proteomes" id="UP000002016">
    <property type="component" value="Chromosome"/>
</dbReference>
<dbReference type="GO" id="GO:0005737">
    <property type="term" value="C:cytoplasm"/>
    <property type="evidence" value="ECO:0007669"/>
    <property type="project" value="UniProtKB-SubCell"/>
</dbReference>
<dbReference type="GO" id="GO:0005524">
    <property type="term" value="F:ATP binding"/>
    <property type="evidence" value="ECO:0007669"/>
    <property type="project" value="UniProtKB-UniRule"/>
</dbReference>
<dbReference type="GO" id="GO:0004821">
    <property type="term" value="F:histidine-tRNA ligase activity"/>
    <property type="evidence" value="ECO:0007669"/>
    <property type="project" value="UniProtKB-UniRule"/>
</dbReference>
<dbReference type="GO" id="GO:0006427">
    <property type="term" value="P:histidyl-tRNA aminoacylation"/>
    <property type="evidence" value="ECO:0007669"/>
    <property type="project" value="UniProtKB-UniRule"/>
</dbReference>
<dbReference type="CDD" id="cd00773">
    <property type="entry name" value="HisRS-like_core"/>
    <property type="match status" value="1"/>
</dbReference>
<dbReference type="CDD" id="cd00859">
    <property type="entry name" value="HisRS_anticodon"/>
    <property type="match status" value="1"/>
</dbReference>
<dbReference type="Gene3D" id="3.40.50.800">
    <property type="entry name" value="Anticodon-binding domain"/>
    <property type="match status" value="1"/>
</dbReference>
<dbReference type="Gene3D" id="3.30.930.10">
    <property type="entry name" value="Bira Bifunctional Protein, Domain 2"/>
    <property type="match status" value="1"/>
</dbReference>
<dbReference type="HAMAP" id="MF_00127">
    <property type="entry name" value="His_tRNA_synth"/>
    <property type="match status" value="1"/>
</dbReference>
<dbReference type="InterPro" id="IPR006195">
    <property type="entry name" value="aa-tRNA-synth_II"/>
</dbReference>
<dbReference type="InterPro" id="IPR045864">
    <property type="entry name" value="aa-tRNA-synth_II/BPL/LPL"/>
</dbReference>
<dbReference type="InterPro" id="IPR004154">
    <property type="entry name" value="Anticodon-bd"/>
</dbReference>
<dbReference type="InterPro" id="IPR036621">
    <property type="entry name" value="Anticodon-bd_dom_sf"/>
</dbReference>
<dbReference type="InterPro" id="IPR015807">
    <property type="entry name" value="His-tRNA-ligase"/>
</dbReference>
<dbReference type="InterPro" id="IPR041715">
    <property type="entry name" value="HisRS-like_core"/>
</dbReference>
<dbReference type="InterPro" id="IPR004516">
    <property type="entry name" value="HisRS/HisZ"/>
</dbReference>
<dbReference type="InterPro" id="IPR033656">
    <property type="entry name" value="HisRS_anticodon"/>
</dbReference>
<dbReference type="NCBIfam" id="TIGR00442">
    <property type="entry name" value="hisS"/>
    <property type="match status" value="1"/>
</dbReference>
<dbReference type="PANTHER" id="PTHR43707:SF1">
    <property type="entry name" value="HISTIDINE--TRNA LIGASE, MITOCHONDRIAL-RELATED"/>
    <property type="match status" value="1"/>
</dbReference>
<dbReference type="PANTHER" id="PTHR43707">
    <property type="entry name" value="HISTIDYL-TRNA SYNTHETASE"/>
    <property type="match status" value="1"/>
</dbReference>
<dbReference type="Pfam" id="PF03129">
    <property type="entry name" value="HGTP_anticodon"/>
    <property type="match status" value="1"/>
</dbReference>
<dbReference type="Pfam" id="PF13393">
    <property type="entry name" value="tRNA-synt_His"/>
    <property type="match status" value="1"/>
</dbReference>
<dbReference type="PIRSF" id="PIRSF001549">
    <property type="entry name" value="His-tRNA_synth"/>
    <property type="match status" value="1"/>
</dbReference>
<dbReference type="SUPFAM" id="SSF52954">
    <property type="entry name" value="Class II aaRS ABD-related"/>
    <property type="match status" value="1"/>
</dbReference>
<dbReference type="SUPFAM" id="SSF55681">
    <property type="entry name" value="Class II aaRS and biotin synthetases"/>
    <property type="match status" value="1"/>
</dbReference>
<dbReference type="PROSITE" id="PS50862">
    <property type="entry name" value="AA_TRNA_LIGASE_II"/>
    <property type="match status" value="1"/>
</dbReference>